<organism>
    <name type="scientific">Novosphingobium sp. (strain KA1)</name>
    <name type="common">Sphingomonas sp. (strain KA1)</name>
    <dbReference type="NCBI Taxonomy" id="164608"/>
    <lineage>
        <taxon>Bacteria</taxon>
        <taxon>Pseudomonadati</taxon>
        <taxon>Pseudomonadota</taxon>
        <taxon>Alphaproteobacteria</taxon>
        <taxon>Sphingomonadales</taxon>
        <taxon>Sphingomonadaceae</taxon>
        <taxon>Novosphingobium</taxon>
    </lineage>
</organism>
<gene>
    <name evidence="2" type="primary">ligU</name>
    <name evidence="5" type="ORF">ORF100</name>
</gene>
<geneLocation type="plasmid" evidence="5">
    <name>pCAR3</name>
</geneLocation>
<accession>Q0KJL4</accession>
<dbReference type="EC" id="5.3.3.-" evidence="1"/>
<dbReference type="EMBL" id="AB270530">
    <property type="protein sequence ID" value="BAF03328.1"/>
    <property type="molecule type" value="Genomic_DNA"/>
</dbReference>
<dbReference type="RefSeq" id="YP_718040.1">
    <property type="nucleotide sequence ID" value="NC_008308.1"/>
</dbReference>
<dbReference type="PDB" id="6P3H">
    <property type="method" value="X-ray"/>
    <property type="resolution" value="1.62 A"/>
    <property type="chains" value="A/B/C/D=1-357"/>
</dbReference>
<dbReference type="PDB" id="6P3J">
    <property type="method" value="X-ray"/>
    <property type="resolution" value="2.02 A"/>
    <property type="chains" value="A/B=1-357"/>
</dbReference>
<dbReference type="PDB" id="6P3K">
    <property type="method" value="X-ray"/>
    <property type="resolution" value="1.88 A"/>
    <property type="chains" value="A/B=1-357"/>
</dbReference>
<dbReference type="PDBsum" id="6P3H"/>
<dbReference type="PDBsum" id="6P3J"/>
<dbReference type="PDBsum" id="6P3K"/>
<dbReference type="SMR" id="Q0KJL4"/>
<dbReference type="SABIO-RK" id="Q0KJL4"/>
<dbReference type="STRENDA-DB" id="I9DP24">
    <property type="experiment" value="LigU Isomerase wild-type"/>
</dbReference>
<dbReference type="UniPathway" id="UPA00892"/>
<dbReference type="GO" id="GO:0016853">
    <property type="term" value="F:isomerase activity"/>
    <property type="evidence" value="ECO:0007669"/>
    <property type="project" value="UniProtKB-KW"/>
</dbReference>
<dbReference type="GO" id="GO:0046274">
    <property type="term" value="P:lignin catabolic process"/>
    <property type="evidence" value="ECO:0007669"/>
    <property type="project" value="UniProtKB-UniPathway"/>
</dbReference>
<dbReference type="Gene3D" id="3.10.310.10">
    <property type="entry name" value="Diaminopimelate Epimerase, Chain A, domain 1"/>
    <property type="match status" value="2"/>
</dbReference>
<dbReference type="InterPro" id="IPR047687">
    <property type="entry name" value="OMA_tautomer-like"/>
</dbReference>
<dbReference type="InterPro" id="IPR007400">
    <property type="entry name" value="PrpF-like"/>
</dbReference>
<dbReference type="NCBIfam" id="NF033377">
    <property type="entry name" value="OMA_tautomer"/>
    <property type="match status" value="1"/>
</dbReference>
<dbReference type="PANTHER" id="PTHR43709">
    <property type="entry name" value="ACONITATE ISOMERASE-RELATED"/>
    <property type="match status" value="1"/>
</dbReference>
<dbReference type="PANTHER" id="PTHR43709:SF3">
    <property type="entry name" value="ISOMERASE YBHH-RELATED"/>
    <property type="match status" value="1"/>
</dbReference>
<dbReference type="Pfam" id="PF04303">
    <property type="entry name" value="PrpF"/>
    <property type="match status" value="1"/>
</dbReference>
<dbReference type="SUPFAM" id="SSF54506">
    <property type="entry name" value="Diaminopimelate epimerase-like"/>
    <property type="match status" value="2"/>
</dbReference>
<comment type="function">
    <text evidence="1">Contributes to the degradation of lignin at the level of the protocatechuate 4,5-cleavage pathway. Catalyzes the isomerization of the double bond between C4 and C5 in (4E)-oxalomesaconate (OMA) to (3Z)-2-keto-4-carboxy-3-hexenedioate (KCH), where the double bond has migrated between C3 and C4 via a 1,3-allylic isomerization.</text>
</comment>
<comment type="catalytic activity">
    <reaction evidence="1">
        <text>(1E)-4-oxobut-1-ene-1,2,4-tricarboxylate = (3Z)-2-oxo-4-carboxy-3-hexenedioate</text>
        <dbReference type="Rhea" id="RHEA:58504"/>
        <dbReference type="ChEBI" id="CHEBI:57471"/>
        <dbReference type="ChEBI" id="CHEBI:142690"/>
    </reaction>
</comment>
<comment type="biophysicochemical properties">
    <kinetics>
        <KM evidence="1">170 uM for (4E)-oxalomesaconate (at pH 8.0)</KM>
        <text evidence="1">kcat is 1300 sec(-1) (at pH 8.0).</text>
    </kinetics>
</comment>
<comment type="pathway">
    <text evidence="4">Secondary metabolite metabolism; lignin degradation.</text>
</comment>
<comment type="similarity">
    <text evidence="3">Belongs to the PrpF family.</text>
</comment>
<evidence type="ECO:0000269" key="1">
    <source>
    </source>
</evidence>
<evidence type="ECO:0000303" key="2">
    <source>
    </source>
</evidence>
<evidence type="ECO:0000305" key="3"/>
<evidence type="ECO:0000305" key="4">
    <source>
    </source>
</evidence>
<evidence type="ECO:0000312" key="5">
    <source>
        <dbReference type="EMBL" id="BAF03328.1"/>
    </source>
</evidence>
<evidence type="ECO:0007829" key="6">
    <source>
        <dbReference type="PDB" id="6P3H"/>
    </source>
</evidence>
<evidence type="ECO:0007829" key="7">
    <source>
        <dbReference type="PDB" id="6P3J"/>
    </source>
</evidence>
<evidence type="ECO:0007829" key="8">
    <source>
        <dbReference type="PDB" id="6P3K"/>
    </source>
</evidence>
<sequence length="357" mass="36855">MPRRDRNMDSAPCMWMRGGTSKGGYFLRADLPADTAARDAFLLAVMGSPDPRQIDGMGGADPLTSKVAVVSKSERPGIDVDYLFLQVFVDQAIVTDAQNCGNILAGVGPFAIERGLVAASGDETRVAIFMENTGQVAVATVRTPGGSVTYAGDAAIDGVPGTHAPIPTEFRDTAGSSCGALLPSGNAVDVVNGLPVTLIDNGMPCVVMKAADVGITGYEDRDSLDANAELKAKIEAIRLAVGELMNLGDVTEKSVPKMMLVAPPRDGGAVCVRSFIPHRAHATIGVLGAVSVATACLIPGSPAAEVAVVPEGARKTLSIEHPTGEMSCVLEVDDAGNVVSAALLRTARKLMDGVVFV</sequence>
<reference key="1">
    <citation type="journal article" date="2007" name="J. Bacteriol.">
        <title>The Sphingomonas plasmid pCAR3 is involved in complete mineralization of carbazole.</title>
        <authorList>
            <person name="Shintani M."/>
            <person name="Urata M."/>
            <person name="Inoue K."/>
            <person name="Eto K."/>
            <person name="Habe H."/>
            <person name="Omori T."/>
            <person name="Yamane H."/>
            <person name="Nojiri H."/>
        </authorList>
    </citation>
    <scope>NUCLEOTIDE SEQUENCE [GENOMIC DNA]</scope>
    <source>
        <strain evidence="5">KA1</strain>
        <plasmid evidence="5">pCAR3</plasmid>
    </source>
</reference>
<reference key="2">
    <citation type="journal article" date="2018" name="Biochemistry">
        <title>Functional annotation of LigU as a 1,3-allylic isomerase during the degradation of lignin in the protocatechuate 4,5-cleavage pathway from the soil bacterium Sphingobium sp. SYK-6.</title>
        <authorList>
            <person name="Hogancamp T.N."/>
            <person name="Raushel F.M."/>
        </authorList>
    </citation>
    <scope>FUNCTION</scope>
    <scope>CATALYTIC ACTIVITY</scope>
    <scope>BIOPHYSICOCHEMICAL PROPERTIES</scope>
    <scope>PATHWAY</scope>
    <source>
        <strain>KA1</strain>
    </source>
</reference>
<protein>
    <recommendedName>
        <fullName evidence="4">(4E)-oxalomesaconate Delta-isomerase</fullName>
        <shortName evidence="4">OMA isomerase</shortName>
        <ecNumber evidence="1">5.3.3.-</ecNumber>
    </recommendedName>
    <alternativeName>
        <fullName evidence="2">1,3-allylic isomerase LigU</fullName>
    </alternativeName>
</protein>
<feature type="chain" id="PRO_0000446300" description="(4E)-oxalomesaconate Delta-isomerase">
    <location>
        <begin position="1"/>
        <end position="357"/>
    </location>
</feature>
<feature type="strand" evidence="6">
    <location>
        <begin position="10"/>
        <end position="18"/>
    </location>
</feature>
<feature type="strand" evidence="6">
    <location>
        <begin position="21"/>
        <end position="27"/>
    </location>
</feature>
<feature type="helix" evidence="6">
    <location>
        <begin position="28"/>
        <end position="30"/>
    </location>
</feature>
<feature type="helix" evidence="6">
    <location>
        <begin position="35"/>
        <end position="46"/>
    </location>
</feature>
<feature type="helix" evidence="6">
    <location>
        <begin position="62"/>
        <end position="64"/>
    </location>
</feature>
<feature type="strand" evidence="6">
    <location>
        <begin position="65"/>
        <end position="72"/>
    </location>
</feature>
<feature type="strand" evidence="6">
    <location>
        <begin position="80"/>
        <end position="87"/>
    </location>
</feature>
<feature type="strand" evidence="6">
    <location>
        <begin position="89"/>
        <end position="92"/>
    </location>
</feature>
<feature type="helix" evidence="6">
    <location>
        <begin position="101"/>
        <end position="113"/>
    </location>
</feature>
<feature type="strand" evidence="6">
    <location>
        <begin position="121"/>
        <end position="130"/>
    </location>
</feature>
<feature type="turn" evidence="6">
    <location>
        <begin position="131"/>
        <end position="133"/>
    </location>
</feature>
<feature type="strand" evidence="6">
    <location>
        <begin position="136"/>
        <end position="142"/>
    </location>
</feature>
<feature type="helix" evidence="6">
    <location>
        <begin position="144"/>
        <end position="146"/>
    </location>
</feature>
<feature type="strand" evidence="6">
    <location>
        <begin position="152"/>
        <end position="154"/>
    </location>
</feature>
<feature type="strand" evidence="6">
    <location>
        <begin position="166"/>
        <end position="172"/>
    </location>
</feature>
<feature type="turn" evidence="6">
    <location>
        <begin position="175"/>
        <end position="178"/>
    </location>
</feature>
<feature type="strand" evidence="6">
    <location>
        <begin position="179"/>
        <end position="182"/>
    </location>
</feature>
<feature type="strand" evidence="8">
    <location>
        <begin position="185"/>
        <end position="187"/>
    </location>
</feature>
<feature type="strand" evidence="6">
    <location>
        <begin position="189"/>
        <end position="191"/>
    </location>
</feature>
<feature type="strand" evidence="6">
    <location>
        <begin position="194"/>
        <end position="209"/>
    </location>
</feature>
<feature type="helix" evidence="6">
    <location>
        <begin position="210"/>
        <end position="213"/>
    </location>
</feature>
<feature type="helix" evidence="6">
    <location>
        <begin position="221"/>
        <end position="225"/>
    </location>
</feature>
<feature type="helix" evidence="6">
    <location>
        <begin position="228"/>
        <end position="241"/>
    </location>
</feature>
<feature type="turn" evidence="6">
    <location>
        <begin position="242"/>
        <end position="246"/>
    </location>
</feature>
<feature type="strand" evidence="6">
    <location>
        <begin position="256"/>
        <end position="262"/>
    </location>
</feature>
<feature type="strand" evidence="6">
    <location>
        <begin position="265"/>
        <end position="280"/>
    </location>
</feature>
<feature type="helix" evidence="6">
    <location>
        <begin position="286"/>
        <end position="295"/>
    </location>
</feature>
<feature type="helix" evidence="6">
    <location>
        <begin position="302"/>
        <end position="306"/>
    </location>
</feature>
<feature type="strand" evidence="6">
    <location>
        <begin position="312"/>
        <end position="321"/>
    </location>
</feature>
<feature type="strand" evidence="6">
    <location>
        <begin position="324"/>
        <end position="332"/>
    </location>
</feature>
<feature type="strand" evidence="7">
    <location>
        <begin position="334"/>
        <end position="336"/>
    </location>
</feature>
<feature type="strand" evidence="6">
    <location>
        <begin position="338"/>
        <end position="345"/>
    </location>
</feature>
<feature type="strand" evidence="6">
    <location>
        <begin position="347"/>
        <end position="356"/>
    </location>
</feature>
<proteinExistence type="evidence at protein level"/>
<name>LIGU_NOVK1</name>
<keyword id="KW-0002">3D-structure</keyword>
<keyword id="KW-0058">Aromatic hydrocarbons catabolism</keyword>
<keyword id="KW-0413">Isomerase</keyword>
<keyword id="KW-0614">Plasmid</keyword>